<name>Y3428_CAUVN</name>
<organism>
    <name type="scientific">Caulobacter vibrioides (strain NA1000 / CB15N)</name>
    <name type="common">Caulobacter crescentus</name>
    <dbReference type="NCBI Taxonomy" id="565050"/>
    <lineage>
        <taxon>Bacteria</taxon>
        <taxon>Pseudomonadati</taxon>
        <taxon>Pseudomonadota</taxon>
        <taxon>Alphaproteobacteria</taxon>
        <taxon>Caulobacterales</taxon>
        <taxon>Caulobacteraceae</taxon>
        <taxon>Caulobacter</taxon>
    </lineage>
</organism>
<evidence type="ECO:0000255" key="1">
    <source>
        <dbReference type="HAMAP-Rule" id="MF_00797"/>
    </source>
</evidence>
<evidence type="ECO:0007829" key="2">
    <source>
        <dbReference type="PDB" id="6JYK"/>
    </source>
</evidence>
<dbReference type="EMBL" id="CP001340">
    <property type="protein sequence ID" value="ACL96893.1"/>
    <property type="molecule type" value="Genomic_DNA"/>
</dbReference>
<dbReference type="RefSeq" id="WP_010921151.1">
    <property type="nucleotide sequence ID" value="NC_011916.1"/>
</dbReference>
<dbReference type="PDB" id="6CG8">
    <property type="method" value="X-ray"/>
    <property type="resolution" value="2.30 A"/>
    <property type="chains" value="A/B/D/E=12-89"/>
</dbReference>
<dbReference type="PDB" id="6JYK">
    <property type="method" value="X-ray"/>
    <property type="resolution" value="2.00 A"/>
    <property type="chains" value="A=1-89"/>
</dbReference>
<dbReference type="PDB" id="6K2J">
    <property type="method" value="X-ray"/>
    <property type="resolution" value="2.40 A"/>
    <property type="chains" value="A/B/C/D=1-89"/>
</dbReference>
<dbReference type="PDB" id="6K5X">
    <property type="method" value="X-ray"/>
    <property type="resolution" value="2.09 A"/>
    <property type="chains" value="A=1-72"/>
</dbReference>
<dbReference type="PDBsum" id="6CG8"/>
<dbReference type="PDBsum" id="6JYK"/>
<dbReference type="PDBsum" id="6K2J"/>
<dbReference type="PDBsum" id="6K5X"/>
<dbReference type="SMR" id="B8H4R9"/>
<dbReference type="KEGG" id="ccs:CCNA_03428"/>
<dbReference type="PATRIC" id="fig|565050.3.peg.3343"/>
<dbReference type="HOGENOM" id="CLU_158651_3_0_5"/>
<dbReference type="OrthoDB" id="9813793at2"/>
<dbReference type="PhylomeDB" id="B8H4R9"/>
<dbReference type="Proteomes" id="UP000001364">
    <property type="component" value="Chromosome"/>
</dbReference>
<dbReference type="GO" id="GO:0003677">
    <property type="term" value="F:DNA binding"/>
    <property type="evidence" value="ECO:0007669"/>
    <property type="project" value="InterPro"/>
</dbReference>
<dbReference type="HAMAP" id="MF_00797">
    <property type="entry name" value="UPF0335"/>
    <property type="match status" value="1"/>
</dbReference>
<dbReference type="InterPro" id="IPR018753">
    <property type="entry name" value="GapR-like"/>
</dbReference>
<dbReference type="InterPro" id="IPR046367">
    <property type="entry name" value="GapR-like_DNA-bd"/>
</dbReference>
<dbReference type="NCBIfam" id="NF010247">
    <property type="entry name" value="PRK13694.1"/>
    <property type="match status" value="1"/>
</dbReference>
<dbReference type="Pfam" id="PF10073">
    <property type="entry name" value="GapR_DNA-bd"/>
    <property type="match status" value="1"/>
</dbReference>
<comment type="similarity">
    <text evidence="1">Belongs to the UPF0335 family.</text>
</comment>
<accession>B8H4R9</accession>
<reference key="1">
    <citation type="journal article" date="2010" name="J. Bacteriol.">
        <title>The genetic basis of laboratory adaptation in Caulobacter crescentus.</title>
        <authorList>
            <person name="Marks M.E."/>
            <person name="Castro-Rojas C.M."/>
            <person name="Teiling C."/>
            <person name="Du L."/>
            <person name="Kapatral V."/>
            <person name="Walunas T.L."/>
            <person name="Crosson S."/>
        </authorList>
    </citation>
    <scope>NUCLEOTIDE SEQUENCE [LARGE SCALE GENOMIC DNA]</scope>
    <source>
        <strain>NA1000 / CB15N</strain>
    </source>
</reference>
<sequence>MADDAIPHTDVLNSTAQGQLKSIIERVERLEVEKAEIMEQIKEVYAEAKGNGFDVKVLKKVVRIRKQDRAKRQEEDAILDLYLSAIGEI</sequence>
<protein>
    <recommendedName>
        <fullName evidence="1">UPF0335 protein CCNA_03428</fullName>
    </recommendedName>
</protein>
<proteinExistence type="evidence at protein level"/>
<keyword id="KW-0002">3D-structure</keyword>
<keyword id="KW-1185">Reference proteome</keyword>
<gene>
    <name type="ordered locus">CCNA_03428</name>
</gene>
<feature type="chain" id="PRO_1000148522" description="UPF0335 protein CCNA_03428">
    <location>
        <begin position="1"/>
        <end position="89"/>
    </location>
</feature>
<feature type="helix" evidence="2">
    <location>
        <begin position="14"/>
        <end position="50"/>
    </location>
</feature>
<feature type="helix" evidence="2">
    <location>
        <begin position="55"/>
        <end position="86"/>
    </location>
</feature>